<evidence type="ECO:0000250" key="1"/>
<evidence type="ECO:0000250" key="2">
    <source>
        <dbReference type="UniProtKB" id="P36575"/>
    </source>
</evidence>
<evidence type="ECO:0000250" key="3">
    <source>
        <dbReference type="UniProtKB" id="Q9EQP6"/>
    </source>
</evidence>
<evidence type="ECO:0000250" key="4">
    <source>
        <dbReference type="UniProtKB" id="Q9N0H5"/>
    </source>
</evidence>
<evidence type="ECO:0000256" key="5">
    <source>
        <dbReference type="SAM" id="MobiDB-lite"/>
    </source>
</evidence>
<evidence type="ECO:0000305" key="6"/>
<accession>Q5DRQ4</accession>
<sequence>MASSSKVFKKTSSNGKLSIYLGKRDFMDHVDTVEPIDGVVLVDPEYLKGRKMFVILTCAFRYGRDDLDVIGLTFRKDLYVLTQQVVPAESNSPQGPLTVLQERLLHKLGENAYPFTLQMVANLPCSVTLQPGPEDSGKACGVDFEVKSFCAENLEEKVSKRDSVRLVVRKVQFAPMEPGPGPWAQTIRRFLLSVQPLQLQAWMDKEVHYHGEPISVNVSINNSTSKVIKKIKISVDQITDVVLYSLDKYTKTVFIQEFTETIAANSSFTQSFSVTPLLSANCRRQGLALDGKLKHEDTNLASSTIVRPGMNKELLGILVSYKVRVNLMVSCGGILGDLTASDVGVELPLTLIHPKPSQETTSSEDIVIEEFARQEDGGEEKQKALAEEGDEGS</sequence>
<reference key="1">
    <citation type="submission" date="2004-01" db="EMBL/GenBank/DDBJ databases">
        <title>Molecular cloning and characterization of retinal-enriched genes in the 13-lined ground squirrel, a cone dominant mammalian animal model.</title>
        <authorList>
            <person name="Yan W."/>
            <person name="Wang C."/>
            <person name="Zack D."/>
        </authorList>
    </citation>
    <scope>NUCLEOTIDE SEQUENCE [MRNA]</scope>
</reference>
<keyword id="KW-0966">Cell projection</keyword>
<keyword id="KW-1015">Disulfide bond</keyword>
<keyword id="KW-1185">Reference proteome</keyword>
<keyword id="KW-0716">Sensory transduction</keyword>
<keyword id="KW-0844">Vision</keyword>
<gene>
    <name type="primary">ARR3</name>
</gene>
<protein>
    <recommendedName>
        <fullName>Arrestin-C</fullName>
    </recommendedName>
    <alternativeName>
        <fullName>Cone arrestin</fullName>
        <shortName>cArr</shortName>
    </alternativeName>
    <alternativeName>
        <fullName>Retinal cone arrestin-3</fullName>
    </alternativeName>
</protein>
<dbReference type="EMBL" id="AY517478">
    <property type="protein sequence ID" value="AAS89816.1"/>
    <property type="molecule type" value="mRNA"/>
</dbReference>
<dbReference type="RefSeq" id="NP_001269195.1">
    <property type="nucleotide sequence ID" value="NM_001282266.1"/>
</dbReference>
<dbReference type="SMR" id="Q5DRQ4"/>
<dbReference type="FunCoup" id="Q5DRQ4">
    <property type="interactions" value="29"/>
</dbReference>
<dbReference type="STRING" id="43179.ENSSTOP00000010290"/>
<dbReference type="GeneID" id="101966281"/>
<dbReference type="KEGG" id="iti:101966281"/>
<dbReference type="CTD" id="407"/>
<dbReference type="eggNOG" id="KOG3865">
    <property type="taxonomic scope" value="Eukaryota"/>
</dbReference>
<dbReference type="InParanoid" id="Q5DRQ4"/>
<dbReference type="OrthoDB" id="298939at2759"/>
<dbReference type="Proteomes" id="UP000005215">
    <property type="component" value="Unassembled WGS sequence"/>
</dbReference>
<dbReference type="GO" id="GO:0001917">
    <property type="term" value="C:photoreceptor inner segment"/>
    <property type="evidence" value="ECO:0007669"/>
    <property type="project" value="UniProtKB-SubCell"/>
</dbReference>
<dbReference type="GO" id="GO:0001750">
    <property type="term" value="C:photoreceptor outer segment"/>
    <property type="evidence" value="ECO:0007669"/>
    <property type="project" value="UniProtKB-SubCell"/>
</dbReference>
<dbReference type="GO" id="GO:0001664">
    <property type="term" value="F:G protein-coupled receptor binding"/>
    <property type="evidence" value="ECO:0007669"/>
    <property type="project" value="TreeGrafter"/>
</dbReference>
<dbReference type="GO" id="GO:0002031">
    <property type="term" value="P:G protein-coupled receptor internalization"/>
    <property type="evidence" value="ECO:0007669"/>
    <property type="project" value="TreeGrafter"/>
</dbReference>
<dbReference type="GO" id="GO:0007165">
    <property type="term" value="P:signal transduction"/>
    <property type="evidence" value="ECO:0007669"/>
    <property type="project" value="InterPro"/>
</dbReference>
<dbReference type="GO" id="GO:0007601">
    <property type="term" value="P:visual perception"/>
    <property type="evidence" value="ECO:0007669"/>
    <property type="project" value="UniProtKB-KW"/>
</dbReference>
<dbReference type="FunFam" id="2.60.40.640:FF:000019">
    <property type="entry name" value="Arrestin 3"/>
    <property type="match status" value="1"/>
</dbReference>
<dbReference type="FunFam" id="2.60.40.840:FF:000002">
    <property type="entry name" value="Arrestin 3"/>
    <property type="match status" value="1"/>
</dbReference>
<dbReference type="Gene3D" id="2.60.40.640">
    <property type="match status" value="1"/>
</dbReference>
<dbReference type="Gene3D" id="2.60.40.840">
    <property type="match status" value="1"/>
</dbReference>
<dbReference type="InterPro" id="IPR000698">
    <property type="entry name" value="Arrestin"/>
</dbReference>
<dbReference type="InterPro" id="IPR014752">
    <property type="entry name" value="Arrestin-like_C"/>
</dbReference>
<dbReference type="InterPro" id="IPR011021">
    <property type="entry name" value="Arrestin-like_N"/>
</dbReference>
<dbReference type="InterPro" id="IPR011022">
    <property type="entry name" value="Arrestin_C-like"/>
</dbReference>
<dbReference type="InterPro" id="IPR017864">
    <property type="entry name" value="Arrestin_CS"/>
</dbReference>
<dbReference type="InterPro" id="IPR014753">
    <property type="entry name" value="Arrestin_N"/>
</dbReference>
<dbReference type="InterPro" id="IPR014756">
    <property type="entry name" value="Ig_E-set"/>
</dbReference>
<dbReference type="PANTHER" id="PTHR11792">
    <property type="entry name" value="ARRESTIN"/>
    <property type="match status" value="1"/>
</dbReference>
<dbReference type="PANTHER" id="PTHR11792:SF19">
    <property type="entry name" value="ARRESTIN-C"/>
    <property type="match status" value="1"/>
</dbReference>
<dbReference type="Pfam" id="PF02752">
    <property type="entry name" value="Arrestin_C"/>
    <property type="match status" value="1"/>
</dbReference>
<dbReference type="Pfam" id="PF00339">
    <property type="entry name" value="Arrestin_N"/>
    <property type="match status" value="1"/>
</dbReference>
<dbReference type="PRINTS" id="PR00309">
    <property type="entry name" value="ARRESTIN"/>
</dbReference>
<dbReference type="SMART" id="SM01017">
    <property type="entry name" value="Arrestin_C"/>
    <property type="match status" value="1"/>
</dbReference>
<dbReference type="SUPFAM" id="SSF81296">
    <property type="entry name" value="E set domains"/>
    <property type="match status" value="2"/>
</dbReference>
<dbReference type="PROSITE" id="PS00295">
    <property type="entry name" value="ARRESTINS"/>
    <property type="match status" value="1"/>
</dbReference>
<proteinExistence type="evidence at transcript level"/>
<name>ARRC_ICTTR</name>
<comment type="function">
    <text evidence="1">May play a role in an as yet undefined retina-specific signal transduction. Could bind to photoactivated-phosphorylated red/green opsins (By similarity).</text>
</comment>
<comment type="subunit">
    <text evidence="2 4">Homodimer; disulfide-linked in response to retinal illumination (By similarity). Interacts with CXCR4; the interaction is dependent on the C-terminal phosphorylation of CXCR4 and modulates the calcium ion mobilization activity of CXCR4 (By similarity).</text>
</comment>
<comment type="subcellular location">
    <subcellularLocation>
        <location evidence="3">Photoreceptor inner segment</location>
    </subcellularLocation>
    <subcellularLocation>
        <location evidence="3">Cell projection</location>
        <location evidence="3">Cilium</location>
        <location evidence="3">Photoreceptor outer segment</location>
    </subcellularLocation>
</comment>
<comment type="similarity">
    <text evidence="6">Belongs to the arrestin family.</text>
</comment>
<feature type="chain" id="PRO_0000250488" description="Arrestin-C">
    <location>
        <begin position="1"/>
        <end position="393"/>
    </location>
</feature>
<feature type="region of interest" description="Disordered" evidence="5">
    <location>
        <begin position="371"/>
        <end position="393"/>
    </location>
</feature>
<feature type="compositionally biased region" description="Basic and acidic residues" evidence="5">
    <location>
        <begin position="371"/>
        <end position="386"/>
    </location>
</feature>
<organism>
    <name type="scientific">Ictidomys tridecemlineatus</name>
    <name type="common">Thirteen-lined ground squirrel</name>
    <name type="synonym">Spermophilus tridecemlineatus</name>
    <dbReference type="NCBI Taxonomy" id="43179"/>
    <lineage>
        <taxon>Eukaryota</taxon>
        <taxon>Metazoa</taxon>
        <taxon>Chordata</taxon>
        <taxon>Craniata</taxon>
        <taxon>Vertebrata</taxon>
        <taxon>Euteleostomi</taxon>
        <taxon>Mammalia</taxon>
        <taxon>Eutheria</taxon>
        <taxon>Euarchontoglires</taxon>
        <taxon>Glires</taxon>
        <taxon>Rodentia</taxon>
        <taxon>Sciuromorpha</taxon>
        <taxon>Sciuridae</taxon>
        <taxon>Xerinae</taxon>
        <taxon>Marmotini</taxon>
        <taxon>Ictidomys</taxon>
    </lineage>
</organism>